<gene>
    <name evidence="1" type="primary">ccmE</name>
    <name evidence="1" type="synonym">cycJ</name>
    <name type="ordered locus">Mext_1407</name>
</gene>
<proteinExistence type="inferred from homology"/>
<feature type="chain" id="PRO_1000189032" description="Cytochrome c-type biogenesis protein CcmE">
    <location>
        <begin position="1"/>
        <end position="177"/>
    </location>
</feature>
<feature type="topological domain" description="Cytoplasmic" evidence="1">
    <location>
        <begin position="1"/>
        <end position="7"/>
    </location>
</feature>
<feature type="transmembrane region" description="Helical; Signal-anchor for type II membrane protein" evidence="1">
    <location>
        <begin position="8"/>
        <end position="28"/>
    </location>
</feature>
<feature type="topological domain" description="Periplasmic" evidence="1">
    <location>
        <begin position="29"/>
        <end position="177"/>
    </location>
</feature>
<feature type="region of interest" description="Disordered" evidence="2">
    <location>
        <begin position="133"/>
        <end position="177"/>
    </location>
</feature>
<feature type="compositionally biased region" description="Basic and acidic residues" evidence="2">
    <location>
        <begin position="145"/>
        <end position="166"/>
    </location>
</feature>
<feature type="binding site" description="covalent" evidence="1">
    <location>
        <position position="122"/>
    </location>
    <ligand>
        <name>heme</name>
        <dbReference type="ChEBI" id="CHEBI:30413"/>
    </ligand>
</feature>
<feature type="binding site" description="axial binding residue" evidence="1">
    <location>
        <position position="126"/>
    </location>
    <ligand>
        <name>heme</name>
        <dbReference type="ChEBI" id="CHEBI:30413"/>
    </ligand>
    <ligandPart>
        <name>Fe</name>
        <dbReference type="ChEBI" id="CHEBI:18248"/>
    </ligandPart>
</feature>
<sequence>MTRKSRRLILIAACGAVLALALGLILSAMSGSIVFFRSPAEVAAQGVPPGTRFRLGGLVKDGSVKRGPDQNVEFAVTDTNATVPVQYRGLLPDLFREGQGIVAEGTLDVGGVFRADTVLAKHDENYMPREVADALKAQGRWQEGGSKEAPKDASKAAPKDAAKPETADATLGQRSER</sequence>
<evidence type="ECO:0000255" key="1">
    <source>
        <dbReference type="HAMAP-Rule" id="MF_01959"/>
    </source>
</evidence>
<evidence type="ECO:0000256" key="2">
    <source>
        <dbReference type="SAM" id="MobiDB-lite"/>
    </source>
</evidence>
<dbReference type="EMBL" id="CP000908">
    <property type="protein sequence ID" value="ABY29808.1"/>
    <property type="molecule type" value="Genomic_DNA"/>
</dbReference>
<dbReference type="RefSeq" id="WP_012253032.1">
    <property type="nucleotide sequence ID" value="NC_010172.1"/>
</dbReference>
<dbReference type="SMR" id="A9W2K2"/>
<dbReference type="KEGG" id="mex:Mext_1407"/>
<dbReference type="eggNOG" id="COG2332">
    <property type="taxonomic scope" value="Bacteria"/>
</dbReference>
<dbReference type="HOGENOM" id="CLU_079503_1_1_5"/>
<dbReference type="BioCyc" id="MEXT419610:MEXT_RS07140-MONOMER"/>
<dbReference type="GO" id="GO:0005886">
    <property type="term" value="C:plasma membrane"/>
    <property type="evidence" value="ECO:0007669"/>
    <property type="project" value="UniProtKB-SubCell"/>
</dbReference>
<dbReference type="GO" id="GO:0020037">
    <property type="term" value="F:heme binding"/>
    <property type="evidence" value="ECO:0007669"/>
    <property type="project" value="InterPro"/>
</dbReference>
<dbReference type="GO" id="GO:0046872">
    <property type="term" value="F:metal ion binding"/>
    <property type="evidence" value="ECO:0007669"/>
    <property type="project" value="UniProtKB-KW"/>
</dbReference>
<dbReference type="GO" id="GO:0017004">
    <property type="term" value="P:cytochrome complex assembly"/>
    <property type="evidence" value="ECO:0007669"/>
    <property type="project" value="UniProtKB-KW"/>
</dbReference>
<dbReference type="FunFam" id="2.40.50.140:FF:000104">
    <property type="entry name" value="Cytochrome c-type biogenesis protein CcmE"/>
    <property type="match status" value="1"/>
</dbReference>
<dbReference type="Gene3D" id="2.40.50.140">
    <property type="entry name" value="Nucleic acid-binding proteins"/>
    <property type="match status" value="1"/>
</dbReference>
<dbReference type="HAMAP" id="MF_01959">
    <property type="entry name" value="CcmE"/>
    <property type="match status" value="1"/>
</dbReference>
<dbReference type="InterPro" id="IPR004329">
    <property type="entry name" value="CcmE"/>
</dbReference>
<dbReference type="InterPro" id="IPR036127">
    <property type="entry name" value="CcmE-like_sf"/>
</dbReference>
<dbReference type="InterPro" id="IPR012340">
    <property type="entry name" value="NA-bd_OB-fold"/>
</dbReference>
<dbReference type="NCBIfam" id="NF009727">
    <property type="entry name" value="PRK13254.1-1"/>
    <property type="match status" value="1"/>
</dbReference>
<dbReference type="NCBIfam" id="NF009729">
    <property type="entry name" value="PRK13254.1-3"/>
    <property type="match status" value="1"/>
</dbReference>
<dbReference type="NCBIfam" id="NF009731">
    <property type="entry name" value="PRK13254.1-5"/>
    <property type="match status" value="1"/>
</dbReference>
<dbReference type="PANTHER" id="PTHR34128">
    <property type="entry name" value="CYTOCHROME C-TYPE BIOGENESIS PROTEIN CCME HOMOLOG, MITOCHONDRIAL"/>
    <property type="match status" value="1"/>
</dbReference>
<dbReference type="PANTHER" id="PTHR34128:SF2">
    <property type="entry name" value="CYTOCHROME C-TYPE BIOGENESIS PROTEIN CCME HOMOLOG, MITOCHONDRIAL"/>
    <property type="match status" value="1"/>
</dbReference>
<dbReference type="Pfam" id="PF03100">
    <property type="entry name" value="CcmE"/>
    <property type="match status" value="1"/>
</dbReference>
<dbReference type="SUPFAM" id="SSF82093">
    <property type="entry name" value="Heme chaperone CcmE"/>
    <property type="match status" value="1"/>
</dbReference>
<comment type="function">
    <text evidence="1">Heme chaperone required for the biogenesis of c-type cytochromes. Transiently binds heme delivered by CcmC and transfers the heme to apo-cytochromes in a process facilitated by CcmF and CcmH.</text>
</comment>
<comment type="subcellular location">
    <subcellularLocation>
        <location evidence="1">Cell inner membrane</location>
        <topology evidence="1">Single-pass type II membrane protein</topology>
        <orientation evidence="1">Periplasmic side</orientation>
    </subcellularLocation>
</comment>
<comment type="similarity">
    <text evidence="1">Belongs to the CcmE/CycJ family.</text>
</comment>
<keyword id="KW-0997">Cell inner membrane</keyword>
<keyword id="KW-1003">Cell membrane</keyword>
<keyword id="KW-0201">Cytochrome c-type biogenesis</keyword>
<keyword id="KW-0349">Heme</keyword>
<keyword id="KW-0408">Iron</keyword>
<keyword id="KW-0472">Membrane</keyword>
<keyword id="KW-0479">Metal-binding</keyword>
<keyword id="KW-0735">Signal-anchor</keyword>
<keyword id="KW-0812">Transmembrane</keyword>
<keyword id="KW-1133">Transmembrane helix</keyword>
<name>CCME_METEP</name>
<accession>A9W2K2</accession>
<organism>
    <name type="scientific">Methylorubrum extorquens (strain PA1)</name>
    <name type="common">Methylobacterium extorquens</name>
    <dbReference type="NCBI Taxonomy" id="419610"/>
    <lineage>
        <taxon>Bacteria</taxon>
        <taxon>Pseudomonadati</taxon>
        <taxon>Pseudomonadota</taxon>
        <taxon>Alphaproteobacteria</taxon>
        <taxon>Hyphomicrobiales</taxon>
        <taxon>Methylobacteriaceae</taxon>
        <taxon>Methylorubrum</taxon>
    </lineage>
</organism>
<protein>
    <recommendedName>
        <fullName evidence="1">Cytochrome c-type biogenesis protein CcmE</fullName>
    </recommendedName>
    <alternativeName>
        <fullName evidence="1">Cytochrome c maturation protein E</fullName>
    </alternativeName>
    <alternativeName>
        <fullName evidence="1">Heme chaperone CcmE</fullName>
    </alternativeName>
</protein>
<reference key="1">
    <citation type="submission" date="2007-12" db="EMBL/GenBank/DDBJ databases">
        <title>Complete sequence of Methylobacterium extorquens PA1.</title>
        <authorList>
            <consortium name="US DOE Joint Genome Institute"/>
            <person name="Copeland A."/>
            <person name="Lucas S."/>
            <person name="Lapidus A."/>
            <person name="Barry K."/>
            <person name="Glavina del Rio T."/>
            <person name="Dalin E."/>
            <person name="Tice H."/>
            <person name="Pitluck S."/>
            <person name="Saunders E."/>
            <person name="Brettin T."/>
            <person name="Bruce D."/>
            <person name="Detter J.C."/>
            <person name="Han C."/>
            <person name="Schmutz J."/>
            <person name="Larimer F."/>
            <person name="Land M."/>
            <person name="Hauser L."/>
            <person name="Kyrpides N."/>
            <person name="Kim E."/>
            <person name="Marx C."/>
            <person name="Richardson P."/>
        </authorList>
    </citation>
    <scope>NUCLEOTIDE SEQUENCE [LARGE SCALE GENOMIC DNA]</scope>
    <source>
        <strain>PA1</strain>
    </source>
</reference>